<reference key="1">
    <citation type="journal article" date="1984" name="Proc. Natl. Acad. Sci. U.S.A.">
        <title>Nucleotide sequence of the tms genes of the pTiA6NC octopine Ti plasmid: two gene products involved in plant tumorigenesis.</title>
        <authorList>
            <person name="Klee H."/>
            <person name="Montoya A."/>
            <person name="Horodyski F."/>
            <person name="Lichtenstein C."/>
            <person name="Garfinkel D."/>
            <person name="Fuller S."/>
            <person name="Flores C."/>
            <person name="Peschon J."/>
            <person name="Nester E."/>
            <person name="Gordon M."/>
        </authorList>
    </citation>
    <scope>NUCLEOTIDE SEQUENCE [GENOMIC DNA]</scope>
</reference>
<name>TR2M_RHIRD</name>
<dbReference type="EC" id="1.13.12.3"/>
<dbReference type="EMBL" id="AH003431">
    <property type="protein sequence ID" value="AAA92550.1"/>
    <property type="molecule type" value="Genomic_DNA"/>
</dbReference>
<dbReference type="PIR" id="A04497">
    <property type="entry name" value="QQAG4T"/>
</dbReference>
<dbReference type="SMR" id="P0A3V3"/>
<dbReference type="OrthoDB" id="337830at2"/>
<dbReference type="BioCyc" id="MetaCyc:MONOMER-7863"/>
<dbReference type="UniPathway" id="UPA00151"/>
<dbReference type="GO" id="GO:0001716">
    <property type="term" value="F:L-amino-acid oxidase activity"/>
    <property type="evidence" value="ECO:0007669"/>
    <property type="project" value="TreeGrafter"/>
</dbReference>
<dbReference type="GO" id="GO:0050361">
    <property type="term" value="F:tryptophan 2-monooxygenase activity"/>
    <property type="evidence" value="ECO:0007669"/>
    <property type="project" value="UniProtKB-EC"/>
</dbReference>
<dbReference type="GO" id="GO:0009063">
    <property type="term" value="P:amino acid catabolic process"/>
    <property type="evidence" value="ECO:0007669"/>
    <property type="project" value="TreeGrafter"/>
</dbReference>
<dbReference type="GO" id="GO:0009851">
    <property type="term" value="P:auxin biosynthetic process"/>
    <property type="evidence" value="ECO:0007669"/>
    <property type="project" value="UniProtKB-UniPathway"/>
</dbReference>
<dbReference type="Gene3D" id="1.10.405.40">
    <property type="match status" value="1"/>
</dbReference>
<dbReference type="Gene3D" id="3.90.660.10">
    <property type="match status" value="1"/>
</dbReference>
<dbReference type="Gene3D" id="3.50.50.60">
    <property type="entry name" value="FAD/NAD(P)-binding domain"/>
    <property type="match status" value="1"/>
</dbReference>
<dbReference type="InterPro" id="IPR002937">
    <property type="entry name" value="Amino_oxidase"/>
</dbReference>
<dbReference type="InterPro" id="IPR036188">
    <property type="entry name" value="FAD/NAD-bd_sf"/>
</dbReference>
<dbReference type="InterPro" id="IPR050281">
    <property type="entry name" value="Flavin_monoamine_oxidase"/>
</dbReference>
<dbReference type="InterPro" id="IPR006064">
    <property type="entry name" value="Glycosidase"/>
</dbReference>
<dbReference type="InterPro" id="IPR012142">
    <property type="entry name" value="Trp_2-mOase"/>
</dbReference>
<dbReference type="PANTHER" id="PTHR10742:SF342">
    <property type="entry name" value="AMINE OXIDASE"/>
    <property type="match status" value="1"/>
</dbReference>
<dbReference type="PANTHER" id="PTHR10742">
    <property type="entry name" value="FLAVIN MONOAMINE OXIDASE"/>
    <property type="match status" value="1"/>
</dbReference>
<dbReference type="Pfam" id="PF01593">
    <property type="entry name" value="Amino_oxidase"/>
    <property type="match status" value="1"/>
</dbReference>
<dbReference type="Pfam" id="PF02027">
    <property type="entry name" value="RolB_RolC"/>
    <property type="match status" value="1"/>
</dbReference>
<dbReference type="PIRSF" id="PIRSF000319">
    <property type="entry name" value="Trp_2-mono_O2ase"/>
    <property type="match status" value="1"/>
</dbReference>
<dbReference type="PRINTS" id="PR00419">
    <property type="entry name" value="ADXRDTASE"/>
</dbReference>
<dbReference type="SUPFAM" id="SSF54373">
    <property type="entry name" value="FAD-linked reductases, C-terminal domain"/>
    <property type="match status" value="1"/>
</dbReference>
<dbReference type="SUPFAM" id="SSF51905">
    <property type="entry name" value="FAD/NAD(P)-binding domain"/>
    <property type="match status" value="1"/>
</dbReference>
<evidence type="ECO:0000250" key="1"/>
<evidence type="ECO:0000305" key="2"/>
<proteinExistence type="inferred from homology"/>
<geneLocation type="plasmid">
    <name>pTiA6NC</name>
</geneLocation>
<keyword id="KW-0073">Auxin biosynthesis</keyword>
<keyword id="KW-0192">Crown gall tumor</keyword>
<keyword id="KW-0285">Flavoprotein</keyword>
<keyword id="KW-0288">FMN</keyword>
<keyword id="KW-0503">Monooxygenase</keyword>
<keyword id="KW-0560">Oxidoreductase</keyword>
<keyword id="KW-0614">Plasmid</keyword>
<gene>
    <name type="primary">tms1</name>
</gene>
<organism>
    <name type="scientific">Rhizobium radiobacter</name>
    <name type="common">Agrobacterium tumefaciens</name>
    <name type="synonym">Agrobacterium radiobacter</name>
    <dbReference type="NCBI Taxonomy" id="358"/>
    <lineage>
        <taxon>Bacteria</taxon>
        <taxon>Pseudomonadati</taxon>
        <taxon>Pseudomonadota</taxon>
        <taxon>Alphaproteobacteria</taxon>
        <taxon>Hyphomicrobiales</taxon>
        <taxon>Rhizobiaceae</taxon>
        <taxon>Rhizobium/Agrobacterium group</taxon>
        <taxon>Agrobacterium</taxon>
        <taxon>Agrobacterium tumefaciens complex</taxon>
    </lineage>
</organism>
<protein>
    <recommendedName>
        <fullName>Tryptophan 2-monooxygenase</fullName>
        <ecNumber>1.13.12.3</ecNumber>
    </recommendedName>
</protein>
<accession>P0A3V3</accession>
<accession>P04029</accession>
<sequence>MSASPLLDNQCDHLPTKMVDLTMVDKADELDRRVSDAFLEREASRGRRITQISTECSAGLACKRLADGRFPEISAGGKVAVLSAYIYIGKEILGRILESKPWARATVSGLVAIDLAPFCMDFSEAQLIQALFLLSGKRCAPIDLSHFVAISISKTAGFRTLPMPLYENGTMKCVTGFTITLEGAVPFDMVAYGRNLMLKGSAGSFPTIDLLYDYRPFFDQCSDSGRIGFFPEDVPKPKVAVIGAGISGLVVANELLHAGVDDVTIYEASDRVGGKLWSHAFRDAPSVVAEMGAMRFPPAAFCLFFFLERYGLSSMRPFPNPGTVDTYLVYQGVQYMWKAGQLPPKLFHRVYNGWRAFLKDGFYERDIVLASPVAITQALKSGDIRWAHDSWQIWLNRFGRESFSSGIERIFLGTHPPGGETWSFPHDWDLFKLMGIGSGGFGPVFESGFIEILRLVINGYEENQRMCPEGISELPRRIASEVVNGVSVSQRICHVQVRAIQKEKTKIKIRLKSGISELYDKVVVTSGLANIQLRHCLTCDTNIFQAPVNQAVDNSHMTGSSKLFLMTERKFWLDHILPSCVLMDGIAKAVYCLDYEPQDPNGKGLVLISYTWEDDSHKLLAVPDKKERLCLLRDAISRSFPAFAQHLFPACADYDQNVIQHDWLTDENAGGAFKLNRRGEDFYSEELFFQALDTANDTGVYLAGCSCSFTGGWVEGAIQTACNAVCAIIHNCGGILAKGNPLEHSWKRYNYRTRN</sequence>
<comment type="catalytic activity">
    <reaction>
        <text>L-tryptophan + O2 = indole-3-acetamide + CO2 + H2O</text>
        <dbReference type="Rhea" id="RHEA:16165"/>
        <dbReference type="ChEBI" id="CHEBI:15377"/>
        <dbReference type="ChEBI" id="CHEBI:15379"/>
        <dbReference type="ChEBI" id="CHEBI:16031"/>
        <dbReference type="ChEBI" id="CHEBI:16526"/>
        <dbReference type="ChEBI" id="CHEBI:57912"/>
        <dbReference type="EC" id="1.13.12.3"/>
    </reaction>
</comment>
<comment type="cofactor">
    <cofactor evidence="1">
        <name>FMN</name>
        <dbReference type="ChEBI" id="CHEBI:58210"/>
    </cofactor>
    <text evidence="1">Binds 1 FMN per subunit.</text>
</comment>
<comment type="pathway">
    <text>Plant hormone metabolism; auxin biosynthesis.</text>
</comment>
<comment type="miscellaneous">
    <text>The sequence shown is that of Ach5.</text>
</comment>
<comment type="similarity">
    <text evidence="2">Belongs to the tryptophan 2-monooxygenase family.</text>
</comment>
<feature type="chain" id="PRO_0000065587" description="Tryptophan 2-monooxygenase">
    <location>
        <begin position="1"/>
        <end position="755"/>
    </location>
</feature>
<feature type="binding site" evidence="1">
    <location>
        <position position="247"/>
    </location>
    <ligand>
        <name>FMN</name>
        <dbReference type="ChEBI" id="CHEBI:58210"/>
    </ligand>
</feature>
<feature type="binding site" evidence="1">
    <location>
        <position position="267"/>
    </location>
    <ligand>
        <name>FMN</name>
        <dbReference type="ChEBI" id="CHEBI:58210"/>
    </ligand>
</feature>
<feature type="binding site" evidence="1">
    <location>
        <position position="275"/>
    </location>
    <ligand>
        <name>FMN</name>
        <dbReference type="ChEBI" id="CHEBI:58210"/>
    </ligand>
</feature>
<feature type="binding site" evidence="1">
    <location>
        <position position="295"/>
    </location>
    <ligand>
        <name>FMN</name>
        <dbReference type="ChEBI" id="CHEBI:58210"/>
    </ligand>
</feature>
<feature type="binding site" evidence="1">
    <location>
        <position position="295"/>
    </location>
    <ligand>
        <name>substrate</name>
    </ligand>
</feature>